<accession>Q8CNJ7</accession>
<comment type="function">
    <text evidence="1">Produces ATP from ADP in the presence of a proton gradient across the membrane. The catalytic sites are hosted primarily by the beta subunits.</text>
</comment>
<comment type="catalytic activity">
    <reaction evidence="1">
        <text>ATP + H2O + 4 H(+)(in) = ADP + phosphate + 5 H(+)(out)</text>
        <dbReference type="Rhea" id="RHEA:57720"/>
        <dbReference type="ChEBI" id="CHEBI:15377"/>
        <dbReference type="ChEBI" id="CHEBI:15378"/>
        <dbReference type="ChEBI" id="CHEBI:30616"/>
        <dbReference type="ChEBI" id="CHEBI:43474"/>
        <dbReference type="ChEBI" id="CHEBI:456216"/>
        <dbReference type="EC" id="7.1.2.2"/>
    </reaction>
</comment>
<comment type="subunit">
    <text evidence="1">F-type ATPases have 2 components, CF(1) - the catalytic core - and CF(0) - the membrane proton channel. CF(1) has five subunits: alpha(3), beta(3), gamma(1), delta(1), epsilon(1). CF(0) has three main subunits: a(1), b(2) and c(9-12). The alpha and beta chains form an alternating ring which encloses part of the gamma chain. CF(1) is attached to CF(0) by a central stalk formed by the gamma and epsilon chains, while a peripheral stalk is formed by the delta and b chains.</text>
</comment>
<comment type="subcellular location">
    <subcellularLocation>
        <location evidence="1">Cell membrane</location>
        <topology evidence="1">Peripheral membrane protein</topology>
    </subcellularLocation>
</comment>
<comment type="similarity">
    <text evidence="1">Belongs to the ATPase alpha/beta chains family.</text>
</comment>
<reference key="1">
    <citation type="journal article" date="2003" name="Mol. Microbiol.">
        <title>Genome-based analysis of virulence genes in a non-biofilm-forming Staphylococcus epidermidis strain (ATCC 12228).</title>
        <authorList>
            <person name="Zhang Y.-Q."/>
            <person name="Ren S.-X."/>
            <person name="Li H.-L."/>
            <person name="Wang Y.-X."/>
            <person name="Fu G."/>
            <person name="Yang J."/>
            <person name="Qin Z.-Q."/>
            <person name="Miao Y.-G."/>
            <person name="Wang W.-Y."/>
            <person name="Chen R.-S."/>
            <person name="Shen Y."/>
            <person name="Chen Z."/>
            <person name="Yuan Z.-H."/>
            <person name="Zhao G.-P."/>
            <person name="Qu D."/>
            <person name="Danchin A."/>
            <person name="Wen Y.-M."/>
        </authorList>
    </citation>
    <scope>NUCLEOTIDE SEQUENCE [LARGE SCALE GENOMIC DNA]</scope>
    <source>
        <strain>ATCC 12228 / FDA PCI 1200</strain>
    </source>
</reference>
<dbReference type="EC" id="7.1.2.2" evidence="1"/>
<dbReference type="EMBL" id="AE015929">
    <property type="protein sequence ID" value="AAO05299.1"/>
    <property type="molecule type" value="Genomic_DNA"/>
</dbReference>
<dbReference type="RefSeq" id="NP_765255.1">
    <property type="nucleotide sequence ID" value="NC_004461.1"/>
</dbReference>
<dbReference type="RefSeq" id="WP_001829930.1">
    <property type="nucleotide sequence ID" value="NZ_WBME01000021.1"/>
</dbReference>
<dbReference type="SMR" id="Q8CNJ7"/>
<dbReference type="GeneID" id="50018199"/>
<dbReference type="KEGG" id="sep:SE_1700"/>
<dbReference type="PATRIC" id="fig|176280.10.peg.1661"/>
<dbReference type="eggNOG" id="COG0055">
    <property type="taxonomic scope" value="Bacteria"/>
</dbReference>
<dbReference type="HOGENOM" id="CLU_022398_0_2_9"/>
<dbReference type="OrthoDB" id="9801639at2"/>
<dbReference type="Proteomes" id="UP000001411">
    <property type="component" value="Chromosome"/>
</dbReference>
<dbReference type="GO" id="GO:0005886">
    <property type="term" value="C:plasma membrane"/>
    <property type="evidence" value="ECO:0007669"/>
    <property type="project" value="UniProtKB-SubCell"/>
</dbReference>
<dbReference type="GO" id="GO:0045259">
    <property type="term" value="C:proton-transporting ATP synthase complex"/>
    <property type="evidence" value="ECO:0007669"/>
    <property type="project" value="UniProtKB-KW"/>
</dbReference>
<dbReference type="GO" id="GO:0005524">
    <property type="term" value="F:ATP binding"/>
    <property type="evidence" value="ECO:0007669"/>
    <property type="project" value="UniProtKB-UniRule"/>
</dbReference>
<dbReference type="GO" id="GO:0016887">
    <property type="term" value="F:ATP hydrolysis activity"/>
    <property type="evidence" value="ECO:0007669"/>
    <property type="project" value="InterPro"/>
</dbReference>
<dbReference type="GO" id="GO:0046933">
    <property type="term" value="F:proton-transporting ATP synthase activity, rotational mechanism"/>
    <property type="evidence" value="ECO:0007669"/>
    <property type="project" value="UniProtKB-UniRule"/>
</dbReference>
<dbReference type="CDD" id="cd18110">
    <property type="entry name" value="ATP-synt_F1_beta_C"/>
    <property type="match status" value="1"/>
</dbReference>
<dbReference type="CDD" id="cd18115">
    <property type="entry name" value="ATP-synt_F1_beta_N"/>
    <property type="match status" value="1"/>
</dbReference>
<dbReference type="CDD" id="cd01133">
    <property type="entry name" value="F1-ATPase_beta_CD"/>
    <property type="match status" value="1"/>
</dbReference>
<dbReference type="FunFam" id="1.10.1140.10:FF:000001">
    <property type="entry name" value="ATP synthase subunit beta"/>
    <property type="match status" value="1"/>
</dbReference>
<dbReference type="FunFam" id="2.40.10.170:FF:000005">
    <property type="entry name" value="ATP synthase subunit beta"/>
    <property type="match status" value="1"/>
</dbReference>
<dbReference type="FunFam" id="3.40.50.300:FF:000004">
    <property type="entry name" value="ATP synthase subunit beta"/>
    <property type="match status" value="1"/>
</dbReference>
<dbReference type="Gene3D" id="2.40.10.170">
    <property type="match status" value="1"/>
</dbReference>
<dbReference type="Gene3D" id="1.10.1140.10">
    <property type="entry name" value="Bovine Mitochondrial F1-atpase, Atp Synthase Beta Chain, Chain D, domain 3"/>
    <property type="match status" value="1"/>
</dbReference>
<dbReference type="Gene3D" id="3.40.50.300">
    <property type="entry name" value="P-loop containing nucleotide triphosphate hydrolases"/>
    <property type="match status" value="1"/>
</dbReference>
<dbReference type="HAMAP" id="MF_01347">
    <property type="entry name" value="ATP_synth_beta_bact"/>
    <property type="match status" value="1"/>
</dbReference>
<dbReference type="InterPro" id="IPR003593">
    <property type="entry name" value="AAA+_ATPase"/>
</dbReference>
<dbReference type="InterPro" id="IPR055190">
    <property type="entry name" value="ATP-synt_VA_C"/>
</dbReference>
<dbReference type="InterPro" id="IPR005722">
    <property type="entry name" value="ATP_synth_F1_bsu"/>
</dbReference>
<dbReference type="InterPro" id="IPR020003">
    <property type="entry name" value="ATPase_a/bsu_AS"/>
</dbReference>
<dbReference type="InterPro" id="IPR050053">
    <property type="entry name" value="ATPase_alpha/beta_chains"/>
</dbReference>
<dbReference type="InterPro" id="IPR004100">
    <property type="entry name" value="ATPase_F1/V1/A1_a/bsu_N"/>
</dbReference>
<dbReference type="InterPro" id="IPR036121">
    <property type="entry name" value="ATPase_F1/V1/A1_a/bsu_N_sf"/>
</dbReference>
<dbReference type="InterPro" id="IPR000194">
    <property type="entry name" value="ATPase_F1/V1/A1_a/bsu_nucl-bd"/>
</dbReference>
<dbReference type="InterPro" id="IPR024034">
    <property type="entry name" value="ATPase_F1/V1_b/a_C"/>
</dbReference>
<dbReference type="InterPro" id="IPR027417">
    <property type="entry name" value="P-loop_NTPase"/>
</dbReference>
<dbReference type="NCBIfam" id="TIGR01039">
    <property type="entry name" value="atpD"/>
    <property type="match status" value="1"/>
</dbReference>
<dbReference type="PANTHER" id="PTHR15184">
    <property type="entry name" value="ATP SYNTHASE"/>
    <property type="match status" value="1"/>
</dbReference>
<dbReference type="PANTHER" id="PTHR15184:SF71">
    <property type="entry name" value="ATP SYNTHASE SUBUNIT BETA, MITOCHONDRIAL"/>
    <property type="match status" value="1"/>
</dbReference>
<dbReference type="Pfam" id="PF00006">
    <property type="entry name" value="ATP-synt_ab"/>
    <property type="match status" value="1"/>
</dbReference>
<dbReference type="Pfam" id="PF02874">
    <property type="entry name" value="ATP-synt_ab_N"/>
    <property type="match status" value="1"/>
</dbReference>
<dbReference type="Pfam" id="PF22919">
    <property type="entry name" value="ATP-synt_VA_C"/>
    <property type="match status" value="1"/>
</dbReference>
<dbReference type="SMART" id="SM00382">
    <property type="entry name" value="AAA"/>
    <property type="match status" value="1"/>
</dbReference>
<dbReference type="SUPFAM" id="SSF47917">
    <property type="entry name" value="C-terminal domain of alpha and beta subunits of F1 ATP synthase"/>
    <property type="match status" value="1"/>
</dbReference>
<dbReference type="SUPFAM" id="SSF50615">
    <property type="entry name" value="N-terminal domain of alpha and beta subunits of F1 ATP synthase"/>
    <property type="match status" value="1"/>
</dbReference>
<dbReference type="SUPFAM" id="SSF52540">
    <property type="entry name" value="P-loop containing nucleoside triphosphate hydrolases"/>
    <property type="match status" value="1"/>
</dbReference>
<dbReference type="PROSITE" id="PS00152">
    <property type="entry name" value="ATPASE_ALPHA_BETA"/>
    <property type="match status" value="1"/>
</dbReference>
<name>ATPB_STAES</name>
<feature type="chain" id="PRO_0000144475" description="ATP synthase subunit beta">
    <location>
        <begin position="1"/>
        <end position="470"/>
    </location>
</feature>
<feature type="binding site" evidence="1">
    <location>
        <begin position="155"/>
        <end position="162"/>
    </location>
    <ligand>
        <name>ATP</name>
        <dbReference type="ChEBI" id="CHEBI:30616"/>
    </ligand>
</feature>
<evidence type="ECO:0000255" key="1">
    <source>
        <dbReference type="HAMAP-Rule" id="MF_01347"/>
    </source>
</evidence>
<keyword id="KW-0066">ATP synthesis</keyword>
<keyword id="KW-0067">ATP-binding</keyword>
<keyword id="KW-1003">Cell membrane</keyword>
<keyword id="KW-0139">CF(1)</keyword>
<keyword id="KW-0375">Hydrogen ion transport</keyword>
<keyword id="KW-0406">Ion transport</keyword>
<keyword id="KW-0472">Membrane</keyword>
<keyword id="KW-0547">Nucleotide-binding</keyword>
<keyword id="KW-1278">Translocase</keyword>
<keyword id="KW-0813">Transport</keyword>
<gene>
    <name evidence="1" type="primary">atpD</name>
    <name type="ordered locus">SE_1700</name>
</gene>
<sequence length="470" mass="51556">MGIGRVTQVMGPVIDVRFEHNEVPEINNALHIEVPKEDGALQLTLEVALQLGDDVVRTIAMDSTDGVQRGMEVKDTGRDISVPVGDVTLGRVFNVLGETIDLDEKIDDSVRRDPIHRQAPGFDELSTKVEILETGIKVVDLLAPYIKGGKIGLFGGAGVGKTVLIQELINNIAQEHGGISVFAGVGERTREGNDLYYEMSDSGVIKKTAMVFGQMNEPPGARMRVALSGLTMAEYFRDEEGQDVLLFIDNIFRFTQAGSEVSALLGRMPSAVGYQPTLATEMGQLQERISSTNKGSVTSIQAVFVPADDYTDPAPATTFAHLDSTTNLERKLTEMGIYPAVDPLASTSRALEPSVVGQEHYDVAREVQSTLQKYRELQDIIAILGMDELSDEDKQTVERARRIQFFLSQNFHVAEQFTGQKGSYVPVKTTVADFRDILDGKYDHIPEDAFRLVGSMEDVIEKAKDMGVEV</sequence>
<proteinExistence type="inferred from homology"/>
<organism>
    <name type="scientific">Staphylococcus epidermidis (strain ATCC 12228 / FDA PCI 1200)</name>
    <dbReference type="NCBI Taxonomy" id="176280"/>
    <lineage>
        <taxon>Bacteria</taxon>
        <taxon>Bacillati</taxon>
        <taxon>Bacillota</taxon>
        <taxon>Bacilli</taxon>
        <taxon>Bacillales</taxon>
        <taxon>Staphylococcaceae</taxon>
        <taxon>Staphylococcus</taxon>
    </lineage>
</organism>
<protein>
    <recommendedName>
        <fullName evidence="1">ATP synthase subunit beta</fullName>
        <ecNumber evidence="1">7.1.2.2</ecNumber>
    </recommendedName>
    <alternativeName>
        <fullName evidence="1">ATP synthase F1 sector subunit beta</fullName>
    </alternativeName>
    <alternativeName>
        <fullName evidence="1">F-ATPase subunit beta</fullName>
    </alternativeName>
</protein>